<proteinExistence type="inferred from homology"/>
<feature type="chain" id="PRO_0000330971" description="Glutamate--tRNA ligase">
    <location>
        <begin position="1"/>
        <end position="501"/>
    </location>
</feature>
<feature type="short sequence motif" description="'HIGH' region" evidence="1">
    <location>
        <begin position="11"/>
        <end position="21"/>
    </location>
</feature>
<feature type="short sequence motif" description="'KMSKS' region" evidence="1">
    <location>
        <begin position="260"/>
        <end position="264"/>
    </location>
</feature>
<feature type="binding site" evidence="1">
    <location>
        <position position="263"/>
    </location>
    <ligand>
        <name>ATP</name>
        <dbReference type="ChEBI" id="CHEBI:30616"/>
    </ligand>
</feature>
<comment type="function">
    <text evidence="1">Catalyzes the attachment of glutamate to tRNA(Glu) in a two-step reaction: glutamate is first activated by ATP to form Glu-AMP and then transferred to the acceptor end of tRNA(Glu).</text>
</comment>
<comment type="catalytic activity">
    <reaction evidence="1">
        <text>tRNA(Glu) + L-glutamate + ATP = L-glutamyl-tRNA(Glu) + AMP + diphosphate</text>
        <dbReference type="Rhea" id="RHEA:23540"/>
        <dbReference type="Rhea" id="RHEA-COMP:9663"/>
        <dbReference type="Rhea" id="RHEA-COMP:9680"/>
        <dbReference type="ChEBI" id="CHEBI:29985"/>
        <dbReference type="ChEBI" id="CHEBI:30616"/>
        <dbReference type="ChEBI" id="CHEBI:33019"/>
        <dbReference type="ChEBI" id="CHEBI:78442"/>
        <dbReference type="ChEBI" id="CHEBI:78520"/>
        <dbReference type="ChEBI" id="CHEBI:456215"/>
        <dbReference type="EC" id="6.1.1.17"/>
    </reaction>
</comment>
<comment type="subunit">
    <text evidence="1">Monomer.</text>
</comment>
<comment type="subcellular location">
    <subcellularLocation>
        <location evidence="1">Cytoplasm</location>
    </subcellularLocation>
</comment>
<comment type="similarity">
    <text evidence="1">Belongs to the class-I aminoacyl-tRNA synthetase family. Glutamate--tRNA ligase type 1 subfamily.</text>
</comment>
<reference key="1">
    <citation type="journal article" date="2007" name="Nat. Biotechnol.">
        <title>Complete genome sequence of the fish pathogen Flavobacterium psychrophilum.</title>
        <authorList>
            <person name="Duchaud E."/>
            <person name="Boussaha M."/>
            <person name="Loux V."/>
            <person name="Bernardet J.-F."/>
            <person name="Michel C."/>
            <person name="Kerouault B."/>
            <person name="Mondot S."/>
            <person name="Nicolas P."/>
            <person name="Bossy R."/>
            <person name="Caron C."/>
            <person name="Bessieres P."/>
            <person name="Gibrat J.-F."/>
            <person name="Claverol S."/>
            <person name="Dumetz F."/>
            <person name="Le Henaff M."/>
            <person name="Benmansour A."/>
        </authorList>
    </citation>
    <scope>NUCLEOTIDE SEQUENCE [LARGE SCALE GENOMIC DNA]</scope>
    <source>
        <strain>ATCC 49511 / DSM 21280 / CIP 103535 / JIP02/86</strain>
    </source>
</reference>
<accession>A6H2H7</accession>
<gene>
    <name evidence="1" type="primary">gltX</name>
    <name type="ordered locus">FP2499</name>
</gene>
<organism>
    <name type="scientific">Flavobacterium psychrophilum (strain ATCC 49511 / DSM 21280 / CIP 103535 / JIP02/86)</name>
    <dbReference type="NCBI Taxonomy" id="402612"/>
    <lineage>
        <taxon>Bacteria</taxon>
        <taxon>Pseudomonadati</taxon>
        <taxon>Bacteroidota</taxon>
        <taxon>Flavobacteriia</taxon>
        <taxon>Flavobacteriales</taxon>
        <taxon>Flavobacteriaceae</taxon>
        <taxon>Flavobacterium</taxon>
    </lineage>
</organism>
<sequence length="501" mass="57538">MSKQVRVRFAPSPTGALHIGGVRTALFNYLFAKKHNGVFYLRIEDTDQNRFVPGAEKYILEALKWLGISPDETIGKNEKFGPYRQSERKHLYKQYADLLINSGWAYYAFDTSESLDTLRKITEAAGNTFIYNHTVRETLDNSLTNSPEKVAERIANGEDYVIRFKTPVNETLHLKDIIRGDIKFETNLLDDKVLFKSDGMPTYHLANIVDDHLMETSHVIRGEEWLPSMPLHVLLYRAFGWEAPEFAHLPLILKPVGNGKLSKRDGEKLGFPVFPLQWKTNEGTSLGYKENGFFPETVINFLAMLGWNDGTQQEIFSLEELVQKFDLNRIHKAGAKFDPEKNKWFNHQYLVKKEDSTLAELFLPILASKGIVTNLDYTTKVVALVKERAHFVNELWDLSDYFFIAPTSYDEKATKNWKEETPELMKQLIVVLNGIEDFTSLNIETIVKDWMTQNEIGMGKVMQPFRLSLVGKMMGPHLFDIIEMIGKKETINRIEKAIATL</sequence>
<keyword id="KW-0030">Aminoacyl-tRNA synthetase</keyword>
<keyword id="KW-0067">ATP-binding</keyword>
<keyword id="KW-0963">Cytoplasm</keyword>
<keyword id="KW-0436">Ligase</keyword>
<keyword id="KW-0547">Nucleotide-binding</keyword>
<keyword id="KW-0648">Protein biosynthesis</keyword>
<keyword id="KW-1185">Reference proteome</keyword>
<name>SYE_FLAPJ</name>
<protein>
    <recommendedName>
        <fullName evidence="1">Glutamate--tRNA ligase</fullName>
        <ecNumber evidence="1">6.1.1.17</ecNumber>
    </recommendedName>
    <alternativeName>
        <fullName evidence="1">Glutamyl-tRNA synthetase</fullName>
        <shortName evidence="1">GluRS</shortName>
    </alternativeName>
</protein>
<evidence type="ECO:0000255" key="1">
    <source>
        <dbReference type="HAMAP-Rule" id="MF_00022"/>
    </source>
</evidence>
<dbReference type="EC" id="6.1.1.17" evidence="1"/>
<dbReference type="EMBL" id="AM398681">
    <property type="protein sequence ID" value="CAL44551.1"/>
    <property type="molecule type" value="Genomic_DNA"/>
</dbReference>
<dbReference type="RefSeq" id="WP_011964585.1">
    <property type="nucleotide sequence ID" value="NC_009613.3"/>
</dbReference>
<dbReference type="RefSeq" id="YP_001297352.1">
    <property type="nucleotide sequence ID" value="NC_009613.3"/>
</dbReference>
<dbReference type="SMR" id="A6H2H7"/>
<dbReference type="STRING" id="402612.FP2499"/>
<dbReference type="EnsemblBacteria" id="CAL44551">
    <property type="protein sequence ID" value="CAL44551"/>
    <property type="gene ID" value="FP2499"/>
</dbReference>
<dbReference type="GeneID" id="66553611"/>
<dbReference type="KEGG" id="fps:FP2499"/>
<dbReference type="PATRIC" id="fig|402612.5.peg.2558"/>
<dbReference type="eggNOG" id="COG0008">
    <property type="taxonomic scope" value="Bacteria"/>
</dbReference>
<dbReference type="HOGENOM" id="CLU_015768_6_3_10"/>
<dbReference type="OrthoDB" id="9807503at2"/>
<dbReference type="Proteomes" id="UP000006394">
    <property type="component" value="Chromosome"/>
</dbReference>
<dbReference type="GO" id="GO:0005829">
    <property type="term" value="C:cytosol"/>
    <property type="evidence" value="ECO:0007669"/>
    <property type="project" value="TreeGrafter"/>
</dbReference>
<dbReference type="GO" id="GO:0005524">
    <property type="term" value="F:ATP binding"/>
    <property type="evidence" value="ECO:0007669"/>
    <property type="project" value="UniProtKB-UniRule"/>
</dbReference>
<dbReference type="GO" id="GO:0004818">
    <property type="term" value="F:glutamate-tRNA ligase activity"/>
    <property type="evidence" value="ECO:0007669"/>
    <property type="project" value="UniProtKB-UniRule"/>
</dbReference>
<dbReference type="GO" id="GO:0000049">
    <property type="term" value="F:tRNA binding"/>
    <property type="evidence" value="ECO:0007669"/>
    <property type="project" value="InterPro"/>
</dbReference>
<dbReference type="GO" id="GO:0008270">
    <property type="term" value="F:zinc ion binding"/>
    <property type="evidence" value="ECO:0007669"/>
    <property type="project" value="InterPro"/>
</dbReference>
<dbReference type="GO" id="GO:0006424">
    <property type="term" value="P:glutamyl-tRNA aminoacylation"/>
    <property type="evidence" value="ECO:0007669"/>
    <property type="project" value="UniProtKB-UniRule"/>
</dbReference>
<dbReference type="CDD" id="cd00808">
    <property type="entry name" value="GluRS_core"/>
    <property type="match status" value="1"/>
</dbReference>
<dbReference type="FunFam" id="3.40.50.620:FF:000127">
    <property type="entry name" value="Glutamate--tRNA ligase"/>
    <property type="match status" value="1"/>
</dbReference>
<dbReference type="Gene3D" id="1.10.10.350">
    <property type="match status" value="1"/>
</dbReference>
<dbReference type="Gene3D" id="3.40.50.620">
    <property type="entry name" value="HUPs"/>
    <property type="match status" value="1"/>
</dbReference>
<dbReference type="HAMAP" id="MF_00022">
    <property type="entry name" value="Glu_tRNA_synth_type1"/>
    <property type="match status" value="1"/>
</dbReference>
<dbReference type="InterPro" id="IPR045462">
    <property type="entry name" value="aa-tRNA-synth_I_cd-bd"/>
</dbReference>
<dbReference type="InterPro" id="IPR020751">
    <property type="entry name" value="aa-tRNA-synth_I_codon-bd_sub2"/>
</dbReference>
<dbReference type="InterPro" id="IPR001412">
    <property type="entry name" value="aa-tRNA-synth_I_CS"/>
</dbReference>
<dbReference type="InterPro" id="IPR008925">
    <property type="entry name" value="aa_tRNA-synth_I_cd-bd_sf"/>
</dbReference>
<dbReference type="InterPro" id="IPR004527">
    <property type="entry name" value="Glu-tRNA-ligase_bac/mito"/>
</dbReference>
<dbReference type="InterPro" id="IPR000924">
    <property type="entry name" value="Glu/Gln-tRNA-synth"/>
</dbReference>
<dbReference type="InterPro" id="IPR020058">
    <property type="entry name" value="Glu/Gln-tRNA-synth_Ib_cat-dom"/>
</dbReference>
<dbReference type="InterPro" id="IPR049940">
    <property type="entry name" value="GluQ/Sye"/>
</dbReference>
<dbReference type="InterPro" id="IPR033910">
    <property type="entry name" value="GluRS_core"/>
</dbReference>
<dbReference type="InterPro" id="IPR014729">
    <property type="entry name" value="Rossmann-like_a/b/a_fold"/>
</dbReference>
<dbReference type="NCBIfam" id="TIGR00464">
    <property type="entry name" value="gltX_bact"/>
    <property type="match status" value="1"/>
</dbReference>
<dbReference type="PANTHER" id="PTHR43311">
    <property type="entry name" value="GLUTAMATE--TRNA LIGASE"/>
    <property type="match status" value="1"/>
</dbReference>
<dbReference type="PANTHER" id="PTHR43311:SF2">
    <property type="entry name" value="GLUTAMATE--TRNA LIGASE, MITOCHONDRIAL-RELATED"/>
    <property type="match status" value="1"/>
</dbReference>
<dbReference type="Pfam" id="PF19269">
    <property type="entry name" value="Anticodon_2"/>
    <property type="match status" value="1"/>
</dbReference>
<dbReference type="Pfam" id="PF00749">
    <property type="entry name" value="tRNA-synt_1c"/>
    <property type="match status" value="1"/>
</dbReference>
<dbReference type="PRINTS" id="PR00987">
    <property type="entry name" value="TRNASYNTHGLU"/>
</dbReference>
<dbReference type="SUPFAM" id="SSF48163">
    <property type="entry name" value="An anticodon-binding domain of class I aminoacyl-tRNA synthetases"/>
    <property type="match status" value="1"/>
</dbReference>
<dbReference type="SUPFAM" id="SSF52374">
    <property type="entry name" value="Nucleotidylyl transferase"/>
    <property type="match status" value="1"/>
</dbReference>
<dbReference type="PROSITE" id="PS00178">
    <property type="entry name" value="AA_TRNA_LIGASE_I"/>
    <property type="match status" value="1"/>
</dbReference>